<sequence length="237" mass="25146">MAYARVLLKLSGEALMGDQSYGIDPAIVQSIAEDVAKVVAKGTQLAIVVGGGNIFRGLKGSAAGMDRATADYVGMLATVMNAITLQDGLERAGVATRVQTAIEMQEVAEPYIRRRAIRHLEKGRVVVFGGGCGNPFFTTDTTASLRAAEINADVVFKATKVDGVYDRDPKRFPDAKRYDSLTFQQVLSGELAVMDSTAIALCKDNNIPIVVFDLFEPGNIGKAVAGEAIGSRISNAT</sequence>
<name>PYRH_PROM3</name>
<gene>
    <name evidence="1" type="primary">pyrH</name>
    <name type="ordered locus">P9303_07621</name>
</gene>
<protein>
    <recommendedName>
        <fullName evidence="1">Uridylate kinase</fullName>
        <shortName evidence="1">UK</shortName>
        <ecNumber evidence="1">2.7.4.22</ecNumber>
    </recommendedName>
    <alternativeName>
        <fullName evidence="1">Uridine monophosphate kinase</fullName>
        <shortName evidence="1">UMP kinase</shortName>
        <shortName evidence="1">UMPK</shortName>
    </alternativeName>
</protein>
<dbReference type="EC" id="2.7.4.22" evidence="1"/>
<dbReference type="EMBL" id="CP000554">
    <property type="protein sequence ID" value="ABM77513.1"/>
    <property type="molecule type" value="Genomic_DNA"/>
</dbReference>
<dbReference type="RefSeq" id="WP_011825427.1">
    <property type="nucleotide sequence ID" value="NC_008820.1"/>
</dbReference>
<dbReference type="SMR" id="A2C7Q3"/>
<dbReference type="STRING" id="59922.P9303_07621"/>
<dbReference type="KEGG" id="pmf:P9303_07621"/>
<dbReference type="HOGENOM" id="CLU_033861_0_0_3"/>
<dbReference type="BioCyc" id="PMAR59922:G1G80-694-MONOMER"/>
<dbReference type="UniPathway" id="UPA00159">
    <property type="reaction ID" value="UER00275"/>
</dbReference>
<dbReference type="Proteomes" id="UP000002274">
    <property type="component" value="Chromosome"/>
</dbReference>
<dbReference type="GO" id="GO:0005737">
    <property type="term" value="C:cytoplasm"/>
    <property type="evidence" value="ECO:0007669"/>
    <property type="project" value="UniProtKB-SubCell"/>
</dbReference>
<dbReference type="GO" id="GO:0005524">
    <property type="term" value="F:ATP binding"/>
    <property type="evidence" value="ECO:0007669"/>
    <property type="project" value="UniProtKB-KW"/>
</dbReference>
<dbReference type="GO" id="GO:0033862">
    <property type="term" value="F:UMP kinase activity"/>
    <property type="evidence" value="ECO:0007669"/>
    <property type="project" value="UniProtKB-EC"/>
</dbReference>
<dbReference type="GO" id="GO:0044210">
    <property type="term" value="P:'de novo' CTP biosynthetic process"/>
    <property type="evidence" value="ECO:0007669"/>
    <property type="project" value="UniProtKB-UniRule"/>
</dbReference>
<dbReference type="GO" id="GO:0006225">
    <property type="term" value="P:UDP biosynthetic process"/>
    <property type="evidence" value="ECO:0007669"/>
    <property type="project" value="TreeGrafter"/>
</dbReference>
<dbReference type="CDD" id="cd04254">
    <property type="entry name" value="AAK_UMPK-PyrH-Ec"/>
    <property type="match status" value="1"/>
</dbReference>
<dbReference type="FunFam" id="3.40.1160.10:FF:000001">
    <property type="entry name" value="Uridylate kinase"/>
    <property type="match status" value="1"/>
</dbReference>
<dbReference type="Gene3D" id="3.40.1160.10">
    <property type="entry name" value="Acetylglutamate kinase-like"/>
    <property type="match status" value="1"/>
</dbReference>
<dbReference type="HAMAP" id="MF_01220_B">
    <property type="entry name" value="PyrH_B"/>
    <property type="match status" value="1"/>
</dbReference>
<dbReference type="InterPro" id="IPR036393">
    <property type="entry name" value="AceGlu_kinase-like_sf"/>
</dbReference>
<dbReference type="InterPro" id="IPR001048">
    <property type="entry name" value="Asp/Glu/Uridylate_kinase"/>
</dbReference>
<dbReference type="InterPro" id="IPR011817">
    <property type="entry name" value="Uridylate_kinase"/>
</dbReference>
<dbReference type="InterPro" id="IPR015963">
    <property type="entry name" value="Uridylate_kinase_bac"/>
</dbReference>
<dbReference type="NCBIfam" id="TIGR02075">
    <property type="entry name" value="pyrH_bact"/>
    <property type="match status" value="1"/>
</dbReference>
<dbReference type="PANTHER" id="PTHR42833">
    <property type="entry name" value="URIDYLATE KINASE"/>
    <property type="match status" value="1"/>
</dbReference>
<dbReference type="PANTHER" id="PTHR42833:SF4">
    <property type="entry name" value="URIDYLATE KINASE PUMPKIN, CHLOROPLASTIC"/>
    <property type="match status" value="1"/>
</dbReference>
<dbReference type="Pfam" id="PF00696">
    <property type="entry name" value="AA_kinase"/>
    <property type="match status" value="1"/>
</dbReference>
<dbReference type="PIRSF" id="PIRSF005650">
    <property type="entry name" value="Uridylate_kin"/>
    <property type="match status" value="1"/>
</dbReference>
<dbReference type="SUPFAM" id="SSF53633">
    <property type="entry name" value="Carbamate kinase-like"/>
    <property type="match status" value="1"/>
</dbReference>
<organism>
    <name type="scientific">Prochlorococcus marinus (strain MIT 9303)</name>
    <dbReference type="NCBI Taxonomy" id="59922"/>
    <lineage>
        <taxon>Bacteria</taxon>
        <taxon>Bacillati</taxon>
        <taxon>Cyanobacteriota</taxon>
        <taxon>Cyanophyceae</taxon>
        <taxon>Synechococcales</taxon>
        <taxon>Prochlorococcaceae</taxon>
        <taxon>Prochlorococcus</taxon>
    </lineage>
</organism>
<reference key="1">
    <citation type="journal article" date="2007" name="PLoS Genet.">
        <title>Patterns and implications of gene gain and loss in the evolution of Prochlorococcus.</title>
        <authorList>
            <person name="Kettler G.C."/>
            <person name="Martiny A.C."/>
            <person name="Huang K."/>
            <person name="Zucker J."/>
            <person name="Coleman M.L."/>
            <person name="Rodrigue S."/>
            <person name="Chen F."/>
            <person name="Lapidus A."/>
            <person name="Ferriera S."/>
            <person name="Johnson J."/>
            <person name="Steglich C."/>
            <person name="Church G.M."/>
            <person name="Richardson P."/>
            <person name="Chisholm S.W."/>
        </authorList>
    </citation>
    <scope>NUCLEOTIDE SEQUENCE [LARGE SCALE GENOMIC DNA]</scope>
    <source>
        <strain>MIT 9303</strain>
    </source>
</reference>
<proteinExistence type="inferred from homology"/>
<evidence type="ECO:0000255" key="1">
    <source>
        <dbReference type="HAMAP-Rule" id="MF_01220"/>
    </source>
</evidence>
<keyword id="KW-0067">ATP-binding</keyword>
<keyword id="KW-0963">Cytoplasm</keyword>
<keyword id="KW-0418">Kinase</keyword>
<keyword id="KW-0547">Nucleotide-binding</keyword>
<keyword id="KW-0665">Pyrimidine biosynthesis</keyword>
<keyword id="KW-0808">Transferase</keyword>
<comment type="function">
    <text evidence="1">Catalyzes the reversible phosphorylation of UMP to UDP.</text>
</comment>
<comment type="catalytic activity">
    <reaction evidence="1">
        <text>UMP + ATP = UDP + ADP</text>
        <dbReference type="Rhea" id="RHEA:24400"/>
        <dbReference type="ChEBI" id="CHEBI:30616"/>
        <dbReference type="ChEBI" id="CHEBI:57865"/>
        <dbReference type="ChEBI" id="CHEBI:58223"/>
        <dbReference type="ChEBI" id="CHEBI:456216"/>
        <dbReference type="EC" id="2.7.4.22"/>
    </reaction>
</comment>
<comment type="activity regulation">
    <text evidence="1">Inhibited by UTP.</text>
</comment>
<comment type="pathway">
    <text evidence="1">Pyrimidine metabolism; CTP biosynthesis via de novo pathway; UDP from UMP (UMPK route): step 1/1.</text>
</comment>
<comment type="subunit">
    <text evidence="1">Homohexamer.</text>
</comment>
<comment type="subcellular location">
    <subcellularLocation>
        <location evidence="1">Cytoplasm</location>
    </subcellularLocation>
</comment>
<comment type="similarity">
    <text evidence="1">Belongs to the UMP kinase family.</text>
</comment>
<feature type="chain" id="PRO_0000323920" description="Uridylate kinase">
    <location>
        <begin position="1"/>
        <end position="237"/>
    </location>
</feature>
<feature type="binding site" evidence="1">
    <location>
        <begin position="9"/>
        <end position="12"/>
    </location>
    <ligand>
        <name>ATP</name>
        <dbReference type="ChEBI" id="CHEBI:30616"/>
    </ligand>
</feature>
<feature type="binding site" evidence="1">
    <location>
        <position position="51"/>
    </location>
    <ligand>
        <name>UMP</name>
        <dbReference type="ChEBI" id="CHEBI:57865"/>
    </ligand>
</feature>
<feature type="binding site" evidence="1">
    <location>
        <position position="52"/>
    </location>
    <ligand>
        <name>ATP</name>
        <dbReference type="ChEBI" id="CHEBI:30616"/>
    </ligand>
</feature>
<feature type="binding site" evidence="1">
    <location>
        <position position="56"/>
    </location>
    <ligand>
        <name>ATP</name>
        <dbReference type="ChEBI" id="CHEBI:30616"/>
    </ligand>
</feature>
<feature type="binding site" evidence="1">
    <location>
        <position position="71"/>
    </location>
    <ligand>
        <name>UMP</name>
        <dbReference type="ChEBI" id="CHEBI:57865"/>
    </ligand>
</feature>
<feature type="binding site" evidence="1">
    <location>
        <begin position="132"/>
        <end position="139"/>
    </location>
    <ligand>
        <name>UMP</name>
        <dbReference type="ChEBI" id="CHEBI:57865"/>
    </ligand>
</feature>
<feature type="binding site" evidence="1">
    <location>
        <position position="159"/>
    </location>
    <ligand>
        <name>ATP</name>
        <dbReference type="ChEBI" id="CHEBI:30616"/>
    </ligand>
</feature>
<feature type="binding site" evidence="1">
    <location>
        <position position="165"/>
    </location>
    <ligand>
        <name>ATP</name>
        <dbReference type="ChEBI" id="CHEBI:30616"/>
    </ligand>
</feature>
<feature type="binding site" evidence="1">
    <location>
        <position position="168"/>
    </location>
    <ligand>
        <name>ATP</name>
        <dbReference type="ChEBI" id="CHEBI:30616"/>
    </ligand>
</feature>
<accession>A2C7Q3</accession>